<evidence type="ECO:0000250" key="1"/>
<evidence type="ECO:0000250" key="2">
    <source>
        <dbReference type="UniProtKB" id="B6D434"/>
    </source>
</evidence>
<evidence type="ECO:0000255" key="3"/>
<evidence type="ECO:0000256" key="4">
    <source>
        <dbReference type="SAM" id="MobiDB-lite"/>
    </source>
</evidence>
<evidence type="ECO:0000303" key="5">
    <source>
    </source>
</evidence>
<evidence type="ECO:0000305" key="6"/>
<evidence type="ECO:0000305" key="7">
    <source>
    </source>
</evidence>
<reference key="1">
    <citation type="journal article" date="2014" name="Amino Acids">
        <title>Vipericidins: a novel family of cathelicidin-related peptides from the venom gland of South American pit vipers.</title>
        <authorList>
            <person name="Falcao C.B."/>
            <person name="de La Torre B.G."/>
            <person name="Perez-Peinado C."/>
            <person name="Barron A.E."/>
            <person name="Andreu D."/>
            <person name="Radis-Baptista G."/>
        </authorList>
    </citation>
    <scope>NUCLEOTIDE SEQUENCE [MRNA]</scope>
    <source>
        <tissue>Venom gland</tissue>
    </source>
</reference>
<sequence>MQGFFWKTWLVLAVCGTPASLAHRPLSYGEALELAVSVYNGKAGEASLYRLLEAVPQPEWDPSSEGSQQLNFTLKETACQVEEERSLEECGFQEDGVVLECTGYYFFGETPPVVVLSCVPVGGVEEEEEEEEEEQKAEAENDEEVEKEKGDEEKDQPKRVKRFKKFFKKVKKSVKKRLKKIFKKPMVIGVTIPF</sequence>
<proteinExistence type="evidence at transcript level"/>
<feature type="signal peptide" evidence="3">
    <location>
        <begin position="1"/>
        <end position="22"/>
    </location>
</feature>
<feature type="propeptide" id="PRO_0000432133" evidence="7">
    <location>
        <begin position="23"/>
        <end position="164"/>
    </location>
</feature>
<feature type="peptide" id="PRO_0000432134" description="Cathelicidin-related peptide isoform 3" evidence="7">
    <location>
        <begin position="161"/>
        <end position="194"/>
    </location>
</feature>
<feature type="region of interest" description="Disordered" evidence="4">
    <location>
        <begin position="125"/>
        <end position="156"/>
    </location>
</feature>
<feature type="compositionally biased region" description="Acidic residues" evidence="4">
    <location>
        <begin position="125"/>
        <end position="145"/>
    </location>
</feature>
<feature type="compositionally biased region" description="Basic and acidic residues" evidence="4">
    <location>
        <begin position="146"/>
        <end position="156"/>
    </location>
</feature>
<feature type="disulfide bond" evidence="1">
    <location>
        <begin position="79"/>
        <end position="90"/>
    </location>
</feature>
<feature type="disulfide bond" evidence="1">
    <location>
        <begin position="101"/>
        <end position="118"/>
    </location>
</feature>
<organism>
    <name type="scientific">Crotalus durissus cascavella</name>
    <name type="common">Northeastern Brazilian rattlesnake</name>
    <dbReference type="NCBI Taxonomy" id="184540"/>
    <lineage>
        <taxon>Eukaryota</taxon>
        <taxon>Metazoa</taxon>
        <taxon>Chordata</taxon>
        <taxon>Craniata</taxon>
        <taxon>Vertebrata</taxon>
        <taxon>Euteleostomi</taxon>
        <taxon>Lepidosauria</taxon>
        <taxon>Squamata</taxon>
        <taxon>Bifurcata</taxon>
        <taxon>Unidentata</taxon>
        <taxon>Episquamata</taxon>
        <taxon>Toxicofera</taxon>
        <taxon>Serpentes</taxon>
        <taxon>Colubroidea</taxon>
        <taxon>Viperidae</taxon>
        <taxon>Crotalinae</taxon>
        <taxon>Crotalus</taxon>
    </lineage>
</organism>
<protein>
    <recommendedName>
        <fullName>Cathelicidin-related peptide isoform 3</fullName>
    </recommendedName>
    <alternativeName>
        <fullName>Cathelicidin-related antimicrobial peptide</fullName>
        <shortName evidence="5">CRAMP</shortName>
    </alternativeName>
    <alternativeName>
        <fullName evidence="5">Vipericidin</fullName>
    </alternativeName>
</protein>
<keyword id="KW-0044">Antibiotic</keyword>
<keyword id="KW-0929">Antimicrobial</keyword>
<keyword id="KW-0165">Cleavage on pair of basic residues</keyword>
<keyword id="KW-1015">Disulfide bond</keyword>
<keyword id="KW-0472">Membrane</keyword>
<keyword id="KW-0964">Secreted</keyword>
<keyword id="KW-0732">Signal</keyword>
<keyword id="KW-1052">Target cell membrane</keyword>
<keyword id="KW-1053">Target membrane</keyword>
<dbReference type="EMBL" id="JX948110">
    <property type="protein sequence ID" value="AGS36139.1"/>
    <property type="molecule type" value="mRNA"/>
</dbReference>
<dbReference type="SMR" id="U5KJJ0"/>
<dbReference type="GO" id="GO:0005615">
    <property type="term" value="C:extracellular space"/>
    <property type="evidence" value="ECO:0007669"/>
    <property type="project" value="TreeGrafter"/>
</dbReference>
<dbReference type="GO" id="GO:0016020">
    <property type="term" value="C:membrane"/>
    <property type="evidence" value="ECO:0007669"/>
    <property type="project" value="UniProtKB-KW"/>
</dbReference>
<dbReference type="GO" id="GO:0044218">
    <property type="term" value="C:other organism cell membrane"/>
    <property type="evidence" value="ECO:0007669"/>
    <property type="project" value="UniProtKB-KW"/>
</dbReference>
<dbReference type="GO" id="GO:0042742">
    <property type="term" value="P:defense response to bacterium"/>
    <property type="evidence" value="ECO:0007669"/>
    <property type="project" value="UniProtKB-KW"/>
</dbReference>
<dbReference type="FunFam" id="3.10.450.10:FF:000034">
    <property type="entry name" value="Cathelicidin-related peptide Oh-Cath"/>
    <property type="match status" value="1"/>
</dbReference>
<dbReference type="Gene3D" id="3.10.450.10">
    <property type="match status" value="1"/>
</dbReference>
<dbReference type="InterPro" id="IPR001894">
    <property type="entry name" value="Cathelicidin-like"/>
</dbReference>
<dbReference type="InterPro" id="IPR046350">
    <property type="entry name" value="Cystatin_sf"/>
</dbReference>
<dbReference type="PANTHER" id="PTHR10206">
    <property type="entry name" value="CATHELICIDIN"/>
    <property type="match status" value="1"/>
</dbReference>
<dbReference type="PANTHER" id="PTHR10206:SF4">
    <property type="entry name" value="NEUTROPHILIC GRANULE PROTEIN"/>
    <property type="match status" value="1"/>
</dbReference>
<dbReference type="Pfam" id="PF00666">
    <property type="entry name" value="Cathelicidins"/>
    <property type="match status" value="1"/>
</dbReference>
<dbReference type="SUPFAM" id="SSF54403">
    <property type="entry name" value="Cystatin/monellin"/>
    <property type="match status" value="1"/>
</dbReference>
<accession>U5KJJ0</accession>
<comment type="function">
    <text>Potent antimicrobial peptide against Gram-negative and Gram-positive bacteria. Adopts an amphipathic alpha helical conformation, that may allow to partition into the target membrane. Low hemolytic activities have been observed on mammalian cells.</text>
</comment>
<comment type="subcellular location">
    <subcellularLocation>
        <location>Secreted</location>
    </subcellularLocation>
    <subcellularLocation>
        <location evidence="2">Target cell membrane</location>
    </subcellularLocation>
    <text evidence="2">Forms a helical membrane channel in the prey.</text>
</comment>
<comment type="tissue specificity">
    <text evidence="7">Expressed by the venom gland.</text>
</comment>
<comment type="miscellaneous">
    <text evidence="7">The putative mature sequence has been predicted by AMPA, a predictive algorithm for identification of peptide stretches with antimicrobial properties.</text>
</comment>
<comment type="similarity">
    <text evidence="6">Belongs to the cathelicidin family.</text>
</comment>
<name>CAMP_CRODC</name>